<protein>
    <recommendedName>
        <fullName>Tectonin beta-propeller repeat-containing protein 1</fullName>
    </recommendedName>
</protein>
<comment type="function">
    <text evidence="1">Tethering factor involved in autophagy. Involved in autophagosome maturation by promoting the autophagosome fusion with lysosomes: acts by associating with both the ATG5-ATG12 conjugate and phosphatidylinositol-3-phosphate (PtdIns(3)P) present at the surface of autophagosomes. Also involved in selective autophagy against bacterial pathogens, by being required for phagophore/preautophagosomal structure biogenesis and maturation (By similarity).</text>
</comment>
<comment type="subunit">
    <text>Interacts with ATG5; the interaction is direct. Interacts with WIPI2. Interacts with the ATG5-ATG12 conjugate, the interaction is however mutually exclusive with ATG16, since it does not interact with ATG12-ATG5-ATG16 complex.</text>
</comment>
<comment type="subcellular location">
    <subcellularLocation>
        <location evidence="1">Cytoplasmic vesicle</location>
        <location evidence="1">Autophagosome membrane</location>
    </subcellularLocation>
    <subcellularLocation>
        <location evidence="1">Lysosome membrane</location>
    </subcellularLocation>
    <text evidence="1">Localizes to Lysosome membranes, and binds PtdIns(3)P at the surface of autophagosome. Localizes to autolysosomes, a vesicle formed by the fusion between autophagosomes and lysosomes (By similarity).</text>
</comment>
<comment type="domain">
    <text evidence="1">The PH domain mediates the binding to phosphatidylinositol-3-phosphate (PtdIns(3)P).</text>
</comment>
<comment type="similarity">
    <text evidence="4">Belongs to the TECPR1 family.</text>
</comment>
<dbReference type="EMBL" id="CR860721">
    <property type="protein sequence ID" value="CAH92836.1"/>
    <property type="molecule type" value="mRNA"/>
</dbReference>
<dbReference type="RefSeq" id="NP_001126656.1">
    <property type="nucleotide sequence ID" value="NM_001133184.1"/>
</dbReference>
<dbReference type="SMR" id="Q5R5Y0"/>
<dbReference type="FunCoup" id="Q5R5Y0">
    <property type="interactions" value="1247"/>
</dbReference>
<dbReference type="STRING" id="9601.ENSPPYP00000019454"/>
<dbReference type="GeneID" id="100173656"/>
<dbReference type="KEGG" id="pon:100173656"/>
<dbReference type="CTD" id="25851"/>
<dbReference type="eggNOG" id="KOG3669">
    <property type="taxonomic scope" value="Eukaryota"/>
</dbReference>
<dbReference type="InParanoid" id="Q5R5Y0"/>
<dbReference type="OrthoDB" id="72441at2759"/>
<dbReference type="Proteomes" id="UP000001595">
    <property type="component" value="Unplaced"/>
</dbReference>
<dbReference type="GO" id="GO:0000421">
    <property type="term" value="C:autophagosome membrane"/>
    <property type="evidence" value="ECO:0000250"/>
    <property type="project" value="UniProtKB"/>
</dbReference>
<dbReference type="GO" id="GO:0031410">
    <property type="term" value="C:cytoplasmic vesicle"/>
    <property type="evidence" value="ECO:0007669"/>
    <property type="project" value="UniProtKB-KW"/>
</dbReference>
<dbReference type="GO" id="GO:0005765">
    <property type="term" value="C:lysosomal membrane"/>
    <property type="evidence" value="ECO:0000250"/>
    <property type="project" value="UniProtKB"/>
</dbReference>
<dbReference type="GO" id="GO:0032266">
    <property type="term" value="F:phosphatidylinositol-3-phosphate binding"/>
    <property type="evidence" value="ECO:0000250"/>
    <property type="project" value="UniProtKB"/>
</dbReference>
<dbReference type="GO" id="GO:0097352">
    <property type="term" value="P:autophagosome maturation"/>
    <property type="evidence" value="ECO:0000250"/>
    <property type="project" value="UniProtKB"/>
</dbReference>
<dbReference type="GO" id="GO:0006914">
    <property type="term" value="P:autophagy"/>
    <property type="evidence" value="ECO:0000250"/>
    <property type="project" value="UniProtKB"/>
</dbReference>
<dbReference type="CDD" id="cd13300">
    <property type="entry name" value="PH1_TECPR1"/>
    <property type="match status" value="1"/>
</dbReference>
<dbReference type="FunFam" id="2.30.29.30:FF:000690">
    <property type="entry name" value="Tectonin beta-propeller repeat-containing protein 1"/>
    <property type="match status" value="1"/>
</dbReference>
<dbReference type="Gene3D" id="2.30.29.30">
    <property type="entry name" value="Pleckstrin-homology domain (PH domain)/Phosphotyrosine-binding domain (PTB)"/>
    <property type="match status" value="1"/>
</dbReference>
<dbReference type="InterPro" id="IPR006624">
    <property type="entry name" value="Beta-propeller_rpt_TECPR"/>
</dbReference>
<dbReference type="InterPro" id="IPR006614">
    <property type="entry name" value="Peroxin/Ferlin"/>
</dbReference>
<dbReference type="InterPro" id="IPR011993">
    <property type="entry name" value="PH-like_dom_sf"/>
</dbReference>
<dbReference type="InterPro" id="IPR010482">
    <property type="entry name" value="TECPR1-like_DysF"/>
</dbReference>
<dbReference type="InterPro" id="IPR051513">
    <property type="entry name" value="Tectonin_beta-propeller"/>
</dbReference>
<dbReference type="PANTHER" id="PTHR23250">
    <property type="entry name" value="DYSFERLIN-RELATED"/>
    <property type="match status" value="1"/>
</dbReference>
<dbReference type="PANTHER" id="PTHR23250:SF1">
    <property type="entry name" value="TECTONIN BETA-PROPELLER REPEAT-CONTAINING PROTEIN 1"/>
    <property type="match status" value="1"/>
</dbReference>
<dbReference type="Pfam" id="PF06462">
    <property type="entry name" value="Hyd_WA"/>
    <property type="match status" value="4"/>
</dbReference>
<dbReference type="Pfam" id="PF06398">
    <property type="entry name" value="Pex24p"/>
    <property type="match status" value="2"/>
</dbReference>
<dbReference type="Pfam" id="PF19193">
    <property type="entry name" value="Tectonin"/>
    <property type="match status" value="1"/>
</dbReference>
<dbReference type="SMART" id="SM00694">
    <property type="entry name" value="DysFC"/>
    <property type="match status" value="2"/>
</dbReference>
<dbReference type="SMART" id="SM00693">
    <property type="entry name" value="DysFN"/>
    <property type="match status" value="2"/>
</dbReference>
<dbReference type="SMART" id="SM00706">
    <property type="entry name" value="TECPR"/>
    <property type="match status" value="11"/>
</dbReference>
<dbReference type="SUPFAM" id="SSF50729">
    <property type="entry name" value="PH domain-like"/>
    <property type="match status" value="1"/>
</dbReference>
<keyword id="KW-0072">Autophagy</keyword>
<keyword id="KW-0968">Cytoplasmic vesicle</keyword>
<keyword id="KW-0446">Lipid-binding</keyword>
<keyword id="KW-0458">Lysosome</keyword>
<keyword id="KW-0472">Membrane</keyword>
<keyword id="KW-0597">Phosphoprotein</keyword>
<keyword id="KW-1185">Reference proteome</keyword>
<keyword id="KW-0677">Repeat</keyword>
<gene>
    <name type="primary">TECPR1</name>
</gene>
<name>TPCR1_PONAB</name>
<feature type="chain" id="PRO_0000337062" description="Tectonin beta-propeller repeat-containing protein 1">
    <location>
        <begin position="1"/>
        <end position="1165"/>
    </location>
</feature>
<feature type="repeat" description="TECPR 1">
    <location>
        <begin position="209"/>
        <end position="240"/>
    </location>
</feature>
<feature type="repeat" description="TECPR 2">
    <location>
        <begin position="254"/>
        <end position="285"/>
    </location>
</feature>
<feature type="repeat" description="TECPR 3">
    <location>
        <begin position="301"/>
        <end position="332"/>
    </location>
</feature>
<feature type="repeat" description="TECPR 4">
    <location>
        <begin position="344"/>
        <end position="376"/>
    </location>
</feature>
<feature type="domain" description="PH">
    <location>
        <begin position="611"/>
        <end position="717"/>
    </location>
</feature>
<feature type="repeat" description="TECPR 5">
    <location>
        <begin position="729"/>
        <end position="756"/>
    </location>
</feature>
<feature type="repeat" description="TECPR 6">
    <location>
        <begin position="953"/>
        <end position="984"/>
    </location>
</feature>
<feature type="repeat" description="TECPR 7">
    <location>
        <begin position="998"/>
        <end position="1029"/>
    </location>
</feature>
<feature type="repeat" description="TECPR 8">
    <location>
        <begin position="1044"/>
        <end position="1075"/>
    </location>
</feature>
<feature type="repeat" description="TECPR 9">
    <location>
        <begin position="1087"/>
        <end position="1127"/>
    </location>
</feature>
<feature type="region of interest" description="Disordered" evidence="3">
    <location>
        <begin position="404"/>
        <end position="486"/>
    </location>
</feature>
<feature type="region of interest" description="Disordered" evidence="3">
    <location>
        <begin position="1140"/>
        <end position="1165"/>
    </location>
</feature>
<feature type="compositionally biased region" description="Low complexity" evidence="3">
    <location>
        <begin position="1143"/>
        <end position="1153"/>
    </location>
</feature>
<feature type="modified residue" description="Phosphoserine" evidence="2">
    <location>
        <position position="938"/>
    </location>
</feature>
<feature type="modified residue" description="Phosphoserine" evidence="2">
    <location>
        <position position="949"/>
    </location>
</feature>
<proteinExistence type="evidence at transcript level"/>
<organism>
    <name type="scientific">Pongo abelii</name>
    <name type="common">Sumatran orangutan</name>
    <name type="synonym">Pongo pygmaeus abelii</name>
    <dbReference type="NCBI Taxonomy" id="9601"/>
    <lineage>
        <taxon>Eukaryota</taxon>
        <taxon>Metazoa</taxon>
        <taxon>Chordata</taxon>
        <taxon>Craniata</taxon>
        <taxon>Vertebrata</taxon>
        <taxon>Euteleostomi</taxon>
        <taxon>Mammalia</taxon>
        <taxon>Eutheria</taxon>
        <taxon>Euarchontoglires</taxon>
        <taxon>Primates</taxon>
        <taxon>Haplorrhini</taxon>
        <taxon>Catarrhini</taxon>
        <taxon>Hominidae</taxon>
        <taxon>Pongo</taxon>
    </lineage>
</organism>
<accession>Q5R5Y0</accession>
<sequence>MPNSVLWAVDLFGRVYTLSTAGQYWELCKDSQLEFKRVSATTQCCWGIACDNQVYVYVCASDVPIRRREEAYENQRWNPVGGFCEKLLLSDRWAWSDVSGLQHRPLDGVALPSPHWEWESDWYVDENFGGEPTEKGGWTYAIDFPATYTKEKKWNSCVRRRKWIRYRRYKSRDIWAKIPSKDDPKELPDPFNDLSVGGWEIAEEPVGRLSVWAVSLQGKVWYREDVSHSNPEGSSWSLLDTPGEVVQISCGPHDLLWATLWEGQALVREGINRSNPKGSSWSIVEPPGSDNGIMHVSVGVSVVWAVTKDWKVWFRRGINSHNPCGTSWIEMVGEMTMVNVGMNDQVWGIGCEDRAVYFRQGVTPSELSGKTWKAIVAARECDRSHSGSSSSLLSAGCFFGDEVRGSGESAPSDTDASSEVERPGPGQTLPAEPLDDSKNAMENSASGPGAGRTTEDTVEDACPAEGSREARPNTHPGPATTPAELPWTNIDLKEPKKVPSHSAAGFPETTSLSSLGLFPLGLEEPYGVDDHPLRAWVSGGGCMVEACAVPRWFTVQAGLSSSVHMLSLSITPAQTAAWRKQIFQQLTERTKRELENFRHYEQAVEQSVWVKTGALQWWCDWKPHKWVDVRVALEQFTGHDGARDSILFIYYVVHEEKKYIHIFLNEVVALVPVLNETKHSFALYTPERTRQRWPVRLAAATEQDMNDWLALLSLSCCESRKVQGRPSPQAIWSITCKGDIFVSEPSPDLEAHEHPLPCDQMFWRQMGGHLRMVEANSRGVVWGIGYDHTAWVYTGGYGGGCFQGLASSTSNIYMQSDVKCVHIYENQRWNPVTGYTSRGLPTDRYMWSDASGLQECTKAGTKPPSLQWAWVSDWFVDFSVPGGTDQEGWQYASDFPASYHGSKTMKDFVRRRCRARKCKLVTSGPWLEVPPIALRDVSIIPESPGAEGSGHSIALWAVSDKGDVLCRLGVSELNPAGSSWLHVGTDQPFTSISIGACYQVWAVARDGSTFYRGSVYPSQPAGDCWYHIPSPPRQRLKQVSVGQTSVYALDENGNLWYRQGITPSYPQGSSWEHVSNNVCRVSVGPLDQVWVIADKVQGSHSLSRGTVCHRTGVQPHEPKGHGWDYGIGGGWDHISVRANATRAPRSSSQEQEPSAPPEAHDPVCC</sequence>
<reference key="1">
    <citation type="submission" date="2004-11" db="EMBL/GenBank/DDBJ databases">
        <authorList>
            <consortium name="The German cDNA consortium"/>
        </authorList>
    </citation>
    <scope>NUCLEOTIDE SEQUENCE [LARGE SCALE MRNA]</scope>
    <source>
        <tissue>Brain cortex</tissue>
    </source>
</reference>
<evidence type="ECO:0000250" key="1"/>
<evidence type="ECO:0000250" key="2">
    <source>
        <dbReference type="UniProtKB" id="Q7Z6L1"/>
    </source>
</evidence>
<evidence type="ECO:0000256" key="3">
    <source>
        <dbReference type="SAM" id="MobiDB-lite"/>
    </source>
</evidence>
<evidence type="ECO:0000305" key="4"/>